<proteinExistence type="evidence at transcript level"/>
<reference key="1">
    <citation type="journal article" date="2002" name="J. Bacteriol.">
        <title>Whole-genome comparison of Mycobacterium tuberculosis clinical and laboratory strains.</title>
        <authorList>
            <person name="Fleischmann R.D."/>
            <person name="Alland D."/>
            <person name="Eisen J.A."/>
            <person name="Carpenter L."/>
            <person name="White O."/>
            <person name="Peterson J.D."/>
            <person name="DeBoy R.T."/>
            <person name="Dodson R.J."/>
            <person name="Gwinn M.L."/>
            <person name="Haft D.H."/>
            <person name="Hickey E.K."/>
            <person name="Kolonay J.F."/>
            <person name="Nelson W.C."/>
            <person name="Umayam L.A."/>
            <person name="Ermolaeva M.D."/>
            <person name="Salzberg S.L."/>
            <person name="Delcher A."/>
            <person name="Utterback T.R."/>
            <person name="Weidman J.F."/>
            <person name="Khouri H.M."/>
            <person name="Gill J."/>
            <person name="Mikula A."/>
            <person name="Bishai W."/>
            <person name="Jacobs W.R. Jr."/>
            <person name="Venter J.C."/>
            <person name="Fraser C.M."/>
        </authorList>
    </citation>
    <scope>NUCLEOTIDE SEQUENCE [LARGE SCALE GENOMIC DNA]</scope>
    <source>
        <strain>CDC 1551 / Oshkosh</strain>
    </source>
</reference>
<reference key="2">
    <citation type="journal article" date="2003" name="J. Exp. Med.">
        <title>Inhibition of respiration by nitric oxide induces a Mycobacterium tuberculosis dormancy program.</title>
        <authorList>
            <person name="Voskuil M.I."/>
            <person name="Schnappinger D."/>
            <person name="Visconti K.C."/>
            <person name="Harrell M.I."/>
            <person name="Dolganov G.M."/>
            <person name="Sherman D.R."/>
            <person name="Schoolnik G.K."/>
        </authorList>
    </citation>
    <scope>INDUCTION BY NITRIC OXIDE (NO) AND BY HYPOXIA</scope>
    <scope>DORMANCY REGULON</scope>
    <source>
        <strain>CDC 1551 / Oshkosh</strain>
    </source>
</reference>
<organism>
    <name type="scientific">Mycobacterium tuberculosis (strain CDC 1551 / Oshkosh)</name>
    <dbReference type="NCBI Taxonomy" id="83331"/>
    <lineage>
        <taxon>Bacteria</taxon>
        <taxon>Bacillati</taxon>
        <taxon>Actinomycetota</taxon>
        <taxon>Actinomycetes</taxon>
        <taxon>Mycobacteriales</taxon>
        <taxon>Mycobacteriaceae</taxon>
        <taxon>Mycobacterium</taxon>
        <taxon>Mycobacterium tuberculosis complex</taxon>
    </lineage>
</organism>
<protein>
    <recommendedName>
        <fullName>Uncharacterized HTH-type transcriptional regulator MT0088</fullName>
    </recommendedName>
</protein>
<comment type="induction">
    <text evidence="2">A member of the dormancy regulon. Induced in response to reduced oxygen tension (hypoxia) and low levels of nitric oxide (NO).</text>
</comment>
<accession>P9WMI6</accession>
<accession>L0T5M3</accession>
<accession>O53626</accession>
<accession>Q7DAH4</accession>
<evidence type="ECO:0000255" key="1">
    <source>
        <dbReference type="PROSITE-ProRule" id="PRU00340"/>
    </source>
</evidence>
<evidence type="ECO:0000269" key="2">
    <source>
    </source>
</evidence>
<dbReference type="EMBL" id="AE000516">
    <property type="protein sequence ID" value="AAK44313.1"/>
    <property type="molecule type" value="Genomic_DNA"/>
</dbReference>
<dbReference type="PIR" id="B70850">
    <property type="entry name" value="B70850"/>
</dbReference>
<dbReference type="RefSeq" id="WP_003400657.1">
    <property type="nucleotide sequence ID" value="NZ_KK341227.1"/>
</dbReference>
<dbReference type="SMR" id="P9WMI6"/>
<dbReference type="KEGG" id="mtc:MT0088"/>
<dbReference type="PATRIC" id="fig|83331.31.peg.93"/>
<dbReference type="HOGENOM" id="CLU_097806_6_1_11"/>
<dbReference type="Proteomes" id="UP000001020">
    <property type="component" value="Chromosome"/>
</dbReference>
<dbReference type="GO" id="GO:0003677">
    <property type="term" value="F:DNA binding"/>
    <property type="evidence" value="ECO:0007669"/>
    <property type="project" value="UniProtKB-KW"/>
</dbReference>
<dbReference type="GO" id="GO:0003700">
    <property type="term" value="F:DNA-binding transcription factor activity"/>
    <property type="evidence" value="ECO:0007669"/>
    <property type="project" value="InterPro"/>
</dbReference>
<dbReference type="CDD" id="cd00090">
    <property type="entry name" value="HTH_ARSR"/>
    <property type="match status" value="1"/>
</dbReference>
<dbReference type="FunFam" id="1.10.10.10:FF:000744">
    <property type="entry name" value="HTH-type transcriptional regulator"/>
    <property type="match status" value="1"/>
</dbReference>
<dbReference type="Gene3D" id="1.10.10.10">
    <property type="entry name" value="Winged helix-like DNA-binding domain superfamily/Winged helix DNA-binding domain"/>
    <property type="match status" value="1"/>
</dbReference>
<dbReference type="InterPro" id="IPR011991">
    <property type="entry name" value="ArsR-like_HTH"/>
</dbReference>
<dbReference type="InterPro" id="IPR001845">
    <property type="entry name" value="HTH_ArsR_DNA-bd_dom"/>
</dbReference>
<dbReference type="InterPro" id="IPR051011">
    <property type="entry name" value="Metal_resp_trans_reg"/>
</dbReference>
<dbReference type="InterPro" id="IPR036388">
    <property type="entry name" value="WH-like_DNA-bd_sf"/>
</dbReference>
<dbReference type="InterPro" id="IPR036390">
    <property type="entry name" value="WH_DNA-bd_sf"/>
</dbReference>
<dbReference type="NCBIfam" id="NF033788">
    <property type="entry name" value="HTH_metalloreg"/>
    <property type="match status" value="1"/>
</dbReference>
<dbReference type="PANTHER" id="PTHR43132">
    <property type="entry name" value="ARSENICAL RESISTANCE OPERON REPRESSOR ARSR-RELATED"/>
    <property type="match status" value="1"/>
</dbReference>
<dbReference type="PANTHER" id="PTHR43132:SF2">
    <property type="entry name" value="ARSENICAL RESISTANCE OPERON REPRESSOR ARSR-RELATED"/>
    <property type="match status" value="1"/>
</dbReference>
<dbReference type="Pfam" id="PF01022">
    <property type="entry name" value="HTH_5"/>
    <property type="match status" value="1"/>
</dbReference>
<dbReference type="PRINTS" id="PR00778">
    <property type="entry name" value="HTHARSR"/>
</dbReference>
<dbReference type="SMART" id="SM00418">
    <property type="entry name" value="HTH_ARSR"/>
    <property type="match status" value="1"/>
</dbReference>
<dbReference type="SUPFAM" id="SSF46785">
    <property type="entry name" value="Winged helix' DNA-binding domain"/>
    <property type="match status" value="1"/>
</dbReference>
<dbReference type="PROSITE" id="PS50987">
    <property type="entry name" value="HTH_ARSR_2"/>
    <property type="match status" value="1"/>
</dbReference>
<gene>
    <name type="ordered locus">MT0088</name>
</gene>
<keyword id="KW-0238">DNA-binding</keyword>
<keyword id="KW-1185">Reference proteome</keyword>
<keyword id="KW-0804">Transcription</keyword>
<keyword id="KW-0805">Transcription regulation</keyword>
<name>Y0081_MYCTO</name>
<sequence length="114" mass="12356">MESEPLYKLKAEFFKTLAHPARIRILELLVERDRSVGELLSSDVGLESSNLSQQLGVLRRAGVVAARRDGNAMIYSIAAPDIAELLAVARKVLARVLSDRVAVLEDLRAGGSAT</sequence>
<feature type="chain" id="PRO_0000427297" description="Uncharacterized HTH-type transcriptional regulator MT0088">
    <location>
        <begin position="1"/>
        <end position="114"/>
    </location>
</feature>
<feature type="domain" description="HTH arsR-type" evidence="1">
    <location>
        <begin position="2"/>
        <end position="97"/>
    </location>
</feature>
<feature type="DNA-binding region" description="H-T-H motif" evidence="1">
    <location>
        <begin position="37"/>
        <end position="60"/>
    </location>
</feature>